<comment type="function">
    <text evidence="1">More likely to influence phosphoinositide metabolism than actin assembly.</text>
</comment>
<comment type="similarity">
    <text evidence="2">Belongs to the profilin family.</text>
</comment>
<protein>
    <recommendedName>
        <fullName>Profilin</fullName>
    </recommendedName>
</protein>
<name>PROF_RABPU</name>
<proteinExistence type="inferred from homology"/>
<sequence length="133" mass="15052">MAEWHKIIEDISKNNKFEDAAIVDYKTTKNVLAAIPNRTFAKINPGEIIPLITNRNILKPLIGQKYCIVYTNSLMDENTYAMELLTGYAPVSPIVIARTHTALIFLMGKPTTSRRDVYRTCRDHATRVRATGN</sequence>
<keyword id="KW-0009">Actin-binding</keyword>
<organism>
    <name type="scientific">Rabbitpox virus (strain Utrecht)</name>
    <name type="common">RPV</name>
    <dbReference type="NCBI Taxonomy" id="45417"/>
    <lineage>
        <taxon>Viruses</taxon>
        <taxon>Varidnaviria</taxon>
        <taxon>Bamfordvirae</taxon>
        <taxon>Nucleocytoviricota</taxon>
        <taxon>Pokkesviricetes</taxon>
        <taxon>Chitovirales</taxon>
        <taxon>Poxviridae</taxon>
        <taxon>Chordopoxvirinae</taxon>
        <taxon>Orthopoxvirus</taxon>
        <taxon>Vaccinia virus</taxon>
    </lineage>
</organism>
<gene>
    <name type="ordered locus">RPXV150</name>
</gene>
<dbReference type="EMBL" id="AY484669">
    <property type="protein sequence ID" value="AAS49863.1"/>
    <property type="molecule type" value="Genomic_DNA"/>
</dbReference>
<dbReference type="SMR" id="Q6RZE1"/>
<dbReference type="Proteomes" id="UP000166173">
    <property type="component" value="Segment"/>
</dbReference>
<dbReference type="GO" id="GO:0003779">
    <property type="term" value="F:actin binding"/>
    <property type="evidence" value="ECO:0007669"/>
    <property type="project" value="UniProtKB-KW"/>
</dbReference>
<dbReference type="Gene3D" id="3.30.450.30">
    <property type="entry name" value="Dynein light chain 2a, cytoplasmic"/>
    <property type="match status" value="1"/>
</dbReference>
<dbReference type="InterPro" id="IPR048278">
    <property type="entry name" value="PFN"/>
</dbReference>
<dbReference type="InterPro" id="IPR005455">
    <property type="entry name" value="PFN_euk"/>
</dbReference>
<dbReference type="InterPro" id="IPR036140">
    <property type="entry name" value="PFN_sf"/>
</dbReference>
<dbReference type="InterPro" id="IPR027310">
    <property type="entry name" value="Profilin_CS"/>
</dbReference>
<dbReference type="Pfam" id="PF00235">
    <property type="entry name" value="Profilin"/>
    <property type="match status" value="1"/>
</dbReference>
<dbReference type="SMART" id="SM00392">
    <property type="entry name" value="PROF"/>
    <property type="match status" value="1"/>
</dbReference>
<dbReference type="SUPFAM" id="SSF55770">
    <property type="entry name" value="Profilin (actin-binding protein)"/>
    <property type="match status" value="1"/>
</dbReference>
<dbReference type="PROSITE" id="PS00414">
    <property type="entry name" value="PROFILIN"/>
    <property type="match status" value="1"/>
</dbReference>
<feature type="chain" id="PRO_0000199691" description="Profilin">
    <location>
        <begin position="1"/>
        <end position="133"/>
    </location>
</feature>
<reference key="1">
    <citation type="journal article" date="2005" name="J. Gen. Virol.">
        <title>Complete coding sequences of the rabbitpox virus genome.</title>
        <authorList>
            <person name="Li G."/>
            <person name="Chen N."/>
            <person name="Roper R.L."/>
            <person name="Feng Z."/>
            <person name="Hunter A.L."/>
            <person name="Danila M."/>
            <person name="Lefkowitz E.J."/>
            <person name="Buller R.M.L."/>
            <person name="Upton C."/>
        </authorList>
    </citation>
    <scope>NUCLEOTIDE SEQUENCE [LARGE SCALE GENOMIC DNA]</scope>
</reference>
<organismHost>
    <name type="scientific">Oryctolagus cuniculus</name>
    <name type="common">Rabbit</name>
    <dbReference type="NCBI Taxonomy" id="9986"/>
</organismHost>
<evidence type="ECO:0000250" key="1"/>
<evidence type="ECO:0000305" key="2"/>
<accession>Q6RZE1</accession>